<protein>
    <recommendedName>
        <fullName evidence="1">3-deoxy-manno-octulosonate cytidylyltransferase 1</fullName>
        <ecNumber evidence="1">2.7.7.38</ecNumber>
    </recommendedName>
    <alternativeName>
        <fullName evidence="1">CMP-2-keto-3-deoxyoctulosonic acid synthase 1</fullName>
        <shortName evidence="1">CKS 1</shortName>
        <shortName evidence="1">CMP-KDO synthase 1</shortName>
    </alternativeName>
</protein>
<evidence type="ECO:0000255" key="1">
    <source>
        <dbReference type="HAMAP-Rule" id="MF_00057"/>
    </source>
</evidence>
<comment type="function">
    <text evidence="1">Activates KDO (a required 8-carbon sugar) for incorporation into bacterial lipopolysaccharide in Gram-negative bacteria.</text>
</comment>
<comment type="catalytic activity">
    <reaction evidence="1">
        <text>3-deoxy-alpha-D-manno-oct-2-ulosonate + CTP = CMP-3-deoxy-beta-D-manno-octulosonate + diphosphate</text>
        <dbReference type="Rhea" id="RHEA:23448"/>
        <dbReference type="ChEBI" id="CHEBI:33019"/>
        <dbReference type="ChEBI" id="CHEBI:37563"/>
        <dbReference type="ChEBI" id="CHEBI:85986"/>
        <dbReference type="ChEBI" id="CHEBI:85987"/>
        <dbReference type="EC" id="2.7.7.38"/>
    </reaction>
</comment>
<comment type="pathway">
    <text evidence="1">Nucleotide-sugar biosynthesis; CMP-3-deoxy-D-manno-octulosonate biosynthesis; CMP-3-deoxy-D-manno-octulosonate from 3-deoxy-D-manno-octulosonate and CTP: step 1/1.</text>
</comment>
<comment type="pathway">
    <text evidence="1">Bacterial outer membrane biogenesis; lipopolysaccharide biosynthesis.</text>
</comment>
<comment type="subcellular location">
    <subcellularLocation>
        <location evidence="1">Cytoplasm</location>
    </subcellularLocation>
</comment>
<comment type="similarity">
    <text evidence="1">Belongs to the KdsB family.</text>
</comment>
<keyword id="KW-0963">Cytoplasm</keyword>
<keyword id="KW-0448">Lipopolysaccharide biosynthesis</keyword>
<keyword id="KW-0548">Nucleotidyltransferase</keyword>
<keyword id="KW-0808">Transferase</keyword>
<name>KDSB1_BURA4</name>
<sequence length="263" mass="28642">MTHQQPFIAVIPARLASTRLPNKPLADLGGKPMVVRVAERAREAGAQQVLVASDAQSVLDAARDHGFEAVLTRADHPSGTDRLAEVAATFGWSDDTVVVNVQGDEPLIDPMLVRDVASHLAAHPDCAIATAAHPIHDAADVFNPNVVKVALDARNVAMYFSRAPIPWSRDAYLPHWPDVATMPPPAFPVHRHIGLYAYRARFLRTYPSLAQAPVEQAEQLEQLRAMWHGERIAVLITEHAPEAGIDTPADLARVQALFRPGSK</sequence>
<feature type="chain" id="PRO_0000370021" description="3-deoxy-manno-octulosonate cytidylyltransferase 1">
    <location>
        <begin position="1"/>
        <end position="263"/>
    </location>
</feature>
<reference key="1">
    <citation type="submission" date="2008-04" db="EMBL/GenBank/DDBJ databases">
        <title>Complete sequence of chromosome 1 of Burkholderia ambifaria MC40-6.</title>
        <authorList>
            <person name="Copeland A."/>
            <person name="Lucas S."/>
            <person name="Lapidus A."/>
            <person name="Glavina del Rio T."/>
            <person name="Dalin E."/>
            <person name="Tice H."/>
            <person name="Pitluck S."/>
            <person name="Chain P."/>
            <person name="Malfatti S."/>
            <person name="Shin M."/>
            <person name="Vergez L."/>
            <person name="Lang D."/>
            <person name="Schmutz J."/>
            <person name="Larimer F."/>
            <person name="Land M."/>
            <person name="Hauser L."/>
            <person name="Kyrpides N."/>
            <person name="Lykidis A."/>
            <person name="Ramette A."/>
            <person name="Konstantinidis K."/>
            <person name="Tiedje J."/>
            <person name="Richardson P."/>
        </authorList>
    </citation>
    <scope>NUCLEOTIDE SEQUENCE [LARGE SCALE GENOMIC DNA]</scope>
    <source>
        <strain>MC40-6</strain>
    </source>
</reference>
<organism>
    <name type="scientific">Burkholderia ambifaria (strain MC40-6)</name>
    <dbReference type="NCBI Taxonomy" id="398577"/>
    <lineage>
        <taxon>Bacteria</taxon>
        <taxon>Pseudomonadati</taxon>
        <taxon>Pseudomonadota</taxon>
        <taxon>Betaproteobacteria</taxon>
        <taxon>Burkholderiales</taxon>
        <taxon>Burkholderiaceae</taxon>
        <taxon>Burkholderia</taxon>
        <taxon>Burkholderia cepacia complex</taxon>
    </lineage>
</organism>
<dbReference type="EC" id="2.7.7.38" evidence="1"/>
<dbReference type="EMBL" id="CP001025">
    <property type="protein sequence ID" value="ACB64943.1"/>
    <property type="molecule type" value="Genomic_DNA"/>
</dbReference>
<dbReference type="RefSeq" id="WP_012364542.1">
    <property type="nucleotide sequence ID" value="NC_010551.1"/>
</dbReference>
<dbReference type="SMR" id="B1YVD9"/>
<dbReference type="KEGG" id="bac:BamMC406_2465"/>
<dbReference type="HOGENOM" id="CLU_065038_1_0_4"/>
<dbReference type="OrthoDB" id="9815559at2"/>
<dbReference type="UniPathway" id="UPA00030"/>
<dbReference type="UniPathway" id="UPA00358">
    <property type="reaction ID" value="UER00476"/>
</dbReference>
<dbReference type="Proteomes" id="UP000001680">
    <property type="component" value="Chromosome 1"/>
</dbReference>
<dbReference type="GO" id="GO:0005829">
    <property type="term" value="C:cytosol"/>
    <property type="evidence" value="ECO:0007669"/>
    <property type="project" value="TreeGrafter"/>
</dbReference>
<dbReference type="GO" id="GO:0008690">
    <property type="term" value="F:3-deoxy-manno-octulosonate cytidylyltransferase activity"/>
    <property type="evidence" value="ECO:0007669"/>
    <property type="project" value="UniProtKB-UniRule"/>
</dbReference>
<dbReference type="GO" id="GO:0033468">
    <property type="term" value="P:CMP-keto-3-deoxy-D-manno-octulosonic acid biosynthetic process"/>
    <property type="evidence" value="ECO:0007669"/>
    <property type="project" value="UniProtKB-UniRule"/>
</dbReference>
<dbReference type="GO" id="GO:0009103">
    <property type="term" value="P:lipopolysaccharide biosynthetic process"/>
    <property type="evidence" value="ECO:0007669"/>
    <property type="project" value="UniProtKB-UniRule"/>
</dbReference>
<dbReference type="CDD" id="cd02517">
    <property type="entry name" value="CMP-KDO-Synthetase"/>
    <property type="match status" value="1"/>
</dbReference>
<dbReference type="FunFam" id="3.90.550.10:FF:000011">
    <property type="entry name" value="3-deoxy-manno-octulosonate cytidylyltransferase"/>
    <property type="match status" value="1"/>
</dbReference>
<dbReference type="Gene3D" id="3.90.550.10">
    <property type="entry name" value="Spore Coat Polysaccharide Biosynthesis Protein SpsA, Chain A"/>
    <property type="match status" value="1"/>
</dbReference>
<dbReference type="HAMAP" id="MF_00057">
    <property type="entry name" value="KdsB"/>
    <property type="match status" value="1"/>
</dbReference>
<dbReference type="InterPro" id="IPR003329">
    <property type="entry name" value="Cytidylyl_trans"/>
</dbReference>
<dbReference type="InterPro" id="IPR004528">
    <property type="entry name" value="KdsB"/>
</dbReference>
<dbReference type="InterPro" id="IPR029044">
    <property type="entry name" value="Nucleotide-diphossugar_trans"/>
</dbReference>
<dbReference type="NCBIfam" id="TIGR00466">
    <property type="entry name" value="kdsB"/>
    <property type="match status" value="1"/>
</dbReference>
<dbReference type="NCBIfam" id="NF003952">
    <property type="entry name" value="PRK05450.1-5"/>
    <property type="match status" value="1"/>
</dbReference>
<dbReference type="NCBIfam" id="NF009905">
    <property type="entry name" value="PRK13368.1"/>
    <property type="match status" value="1"/>
</dbReference>
<dbReference type="PANTHER" id="PTHR42866">
    <property type="entry name" value="3-DEOXY-MANNO-OCTULOSONATE CYTIDYLYLTRANSFERASE"/>
    <property type="match status" value="1"/>
</dbReference>
<dbReference type="PANTHER" id="PTHR42866:SF2">
    <property type="entry name" value="3-DEOXY-MANNO-OCTULOSONATE CYTIDYLYLTRANSFERASE, MITOCHONDRIAL"/>
    <property type="match status" value="1"/>
</dbReference>
<dbReference type="Pfam" id="PF02348">
    <property type="entry name" value="CTP_transf_3"/>
    <property type="match status" value="1"/>
</dbReference>
<dbReference type="SUPFAM" id="SSF53448">
    <property type="entry name" value="Nucleotide-diphospho-sugar transferases"/>
    <property type="match status" value="1"/>
</dbReference>
<accession>B1YVD9</accession>
<proteinExistence type="inferred from homology"/>
<gene>
    <name evidence="1" type="primary">kdsB1</name>
    <name type="ordered locus">BamMC406_2465</name>
</gene>